<sequence>MNIFNKLKQDIIAASRQLYNNQEIANNATIETPKDNFNGDLSSNIAMIIAAKENISPREVALKFKEILITLPYIASIEIAGPGFINFTIKAETWQIAIKDILQHEEKFCEIDIDKSRNINIEYVSANPTGPMHIGHARGAVYGDVLARILQKVGYFVTKEYYVNDAGSQINDLVSTVLLRYREALGETITIPDGLYPGEYLIPLGQILAEEYGNKLLMMDEEERFKIVKNFAVEKMLDLNRKDLADLGIKHDIFFSEQSLHDKCAIEETVKLLTGMGLIYEGILPPPKGKVHDEWDNRVQKLFKSTNYGDSQDRPIEKADGSWSYFASDLAYAKDKIDRGVSHLIYVLGADHSGYVKRIEAIVKALGKEQVKVDVKICQLVNFVENGVPVKMSKRLGSFASVQDVNHEVGKDIIRFMMLTRQNDKPLDFDLVKVKEQSRENPIFYVQYAHVRTISILSKARELMPESYNNFEACKYDLSLLSSEEEIAIIKLLASWTKTLETSAKYFEPHRIAFYLINLASKFHSMWNFGKEHSDYRFIIESNKELTTARLALATAIQKVIASGLEVIGVEPMDRM</sequence>
<evidence type="ECO:0000255" key="1">
    <source>
        <dbReference type="HAMAP-Rule" id="MF_00123"/>
    </source>
</evidence>
<reference key="1">
    <citation type="submission" date="2007-09" db="EMBL/GenBank/DDBJ databases">
        <title>Complete genome sequence of Rickettsia akari.</title>
        <authorList>
            <person name="Madan A."/>
            <person name="Fahey J."/>
            <person name="Helton E."/>
            <person name="Ketteman M."/>
            <person name="Madan A."/>
            <person name="Rodrigues S."/>
            <person name="Sanchez A."/>
            <person name="Whiting M."/>
            <person name="Dasch G."/>
            <person name="Eremeeva M."/>
        </authorList>
    </citation>
    <scope>NUCLEOTIDE SEQUENCE [LARGE SCALE GENOMIC DNA]</scope>
    <source>
        <strain>Hartford</strain>
    </source>
</reference>
<proteinExistence type="inferred from homology"/>
<comment type="catalytic activity">
    <reaction evidence="1">
        <text>tRNA(Arg) + L-arginine + ATP = L-arginyl-tRNA(Arg) + AMP + diphosphate</text>
        <dbReference type="Rhea" id="RHEA:20301"/>
        <dbReference type="Rhea" id="RHEA-COMP:9658"/>
        <dbReference type="Rhea" id="RHEA-COMP:9673"/>
        <dbReference type="ChEBI" id="CHEBI:30616"/>
        <dbReference type="ChEBI" id="CHEBI:32682"/>
        <dbReference type="ChEBI" id="CHEBI:33019"/>
        <dbReference type="ChEBI" id="CHEBI:78442"/>
        <dbReference type="ChEBI" id="CHEBI:78513"/>
        <dbReference type="ChEBI" id="CHEBI:456215"/>
        <dbReference type="EC" id="6.1.1.19"/>
    </reaction>
</comment>
<comment type="subunit">
    <text evidence="1">Monomer.</text>
</comment>
<comment type="subcellular location">
    <subcellularLocation>
        <location evidence="1">Cytoplasm</location>
    </subcellularLocation>
</comment>
<comment type="similarity">
    <text evidence="1">Belongs to the class-I aminoacyl-tRNA synthetase family.</text>
</comment>
<keyword id="KW-0030">Aminoacyl-tRNA synthetase</keyword>
<keyword id="KW-0067">ATP-binding</keyword>
<keyword id="KW-0963">Cytoplasm</keyword>
<keyword id="KW-0436">Ligase</keyword>
<keyword id="KW-0547">Nucleotide-binding</keyword>
<keyword id="KW-0648">Protein biosynthesis</keyword>
<feature type="chain" id="PRO_1000018104" description="Arginine--tRNA ligase">
    <location>
        <begin position="1"/>
        <end position="576"/>
    </location>
</feature>
<feature type="short sequence motif" description="'HIGH' region">
    <location>
        <begin position="126"/>
        <end position="136"/>
    </location>
</feature>
<protein>
    <recommendedName>
        <fullName evidence="1">Arginine--tRNA ligase</fullName>
        <ecNumber evidence="1">6.1.1.19</ecNumber>
    </recommendedName>
    <alternativeName>
        <fullName evidence="1">Arginyl-tRNA synthetase</fullName>
        <shortName evidence="1">ArgRS</shortName>
    </alternativeName>
</protein>
<gene>
    <name evidence="1" type="primary">argS</name>
    <name type="ordered locus">A1C_00505</name>
</gene>
<name>SYR_RICAH</name>
<dbReference type="EC" id="6.1.1.19" evidence="1"/>
<dbReference type="EMBL" id="CP000847">
    <property type="protein sequence ID" value="ABV74434.1"/>
    <property type="molecule type" value="Genomic_DNA"/>
</dbReference>
<dbReference type="RefSeq" id="WP_012013304.1">
    <property type="nucleotide sequence ID" value="NC_009881.1"/>
</dbReference>
<dbReference type="SMR" id="A8GM09"/>
<dbReference type="STRING" id="293614.A1C_00505"/>
<dbReference type="KEGG" id="rak:A1C_00505"/>
<dbReference type="eggNOG" id="COG0018">
    <property type="taxonomic scope" value="Bacteria"/>
</dbReference>
<dbReference type="HOGENOM" id="CLU_006406_0_1_5"/>
<dbReference type="Proteomes" id="UP000006830">
    <property type="component" value="Chromosome"/>
</dbReference>
<dbReference type="GO" id="GO:0005737">
    <property type="term" value="C:cytoplasm"/>
    <property type="evidence" value="ECO:0007669"/>
    <property type="project" value="UniProtKB-SubCell"/>
</dbReference>
<dbReference type="GO" id="GO:0004814">
    <property type="term" value="F:arginine-tRNA ligase activity"/>
    <property type="evidence" value="ECO:0007669"/>
    <property type="project" value="UniProtKB-UniRule"/>
</dbReference>
<dbReference type="GO" id="GO:0005524">
    <property type="term" value="F:ATP binding"/>
    <property type="evidence" value="ECO:0007669"/>
    <property type="project" value="UniProtKB-UniRule"/>
</dbReference>
<dbReference type="GO" id="GO:0006420">
    <property type="term" value="P:arginyl-tRNA aminoacylation"/>
    <property type="evidence" value="ECO:0007669"/>
    <property type="project" value="UniProtKB-UniRule"/>
</dbReference>
<dbReference type="CDD" id="cd00671">
    <property type="entry name" value="ArgRS_core"/>
    <property type="match status" value="1"/>
</dbReference>
<dbReference type="Gene3D" id="3.30.1360.70">
    <property type="entry name" value="Arginyl tRNA synthetase N-terminal domain"/>
    <property type="match status" value="1"/>
</dbReference>
<dbReference type="Gene3D" id="3.40.50.620">
    <property type="entry name" value="HUPs"/>
    <property type="match status" value="1"/>
</dbReference>
<dbReference type="Gene3D" id="1.10.730.10">
    <property type="entry name" value="Isoleucyl-tRNA Synthetase, Domain 1"/>
    <property type="match status" value="1"/>
</dbReference>
<dbReference type="HAMAP" id="MF_00123">
    <property type="entry name" value="Arg_tRNA_synth"/>
    <property type="match status" value="1"/>
</dbReference>
<dbReference type="InterPro" id="IPR001412">
    <property type="entry name" value="aa-tRNA-synth_I_CS"/>
</dbReference>
<dbReference type="InterPro" id="IPR001278">
    <property type="entry name" value="Arg-tRNA-ligase"/>
</dbReference>
<dbReference type="InterPro" id="IPR005148">
    <property type="entry name" value="Arg-tRNA-synth_N"/>
</dbReference>
<dbReference type="InterPro" id="IPR036695">
    <property type="entry name" value="Arg-tRNA-synth_N_sf"/>
</dbReference>
<dbReference type="InterPro" id="IPR035684">
    <property type="entry name" value="ArgRS_core"/>
</dbReference>
<dbReference type="InterPro" id="IPR008909">
    <property type="entry name" value="DALR_anticod-bd"/>
</dbReference>
<dbReference type="InterPro" id="IPR014729">
    <property type="entry name" value="Rossmann-like_a/b/a_fold"/>
</dbReference>
<dbReference type="InterPro" id="IPR009080">
    <property type="entry name" value="tRNAsynth_Ia_anticodon-bd"/>
</dbReference>
<dbReference type="NCBIfam" id="TIGR00456">
    <property type="entry name" value="argS"/>
    <property type="match status" value="1"/>
</dbReference>
<dbReference type="PANTHER" id="PTHR11956:SF5">
    <property type="entry name" value="ARGININE--TRNA LIGASE, CYTOPLASMIC"/>
    <property type="match status" value="1"/>
</dbReference>
<dbReference type="PANTHER" id="PTHR11956">
    <property type="entry name" value="ARGINYL-TRNA SYNTHETASE"/>
    <property type="match status" value="1"/>
</dbReference>
<dbReference type="Pfam" id="PF03485">
    <property type="entry name" value="Arg_tRNA_synt_N"/>
    <property type="match status" value="1"/>
</dbReference>
<dbReference type="Pfam" id="PF05746">
    <property type="entry name" value="DALR_1"/>
    <property type="match status" value="1"/>
</dbReference>
<dbReference type="Pfam" id="PF00750">
    <property type="entry name" value="tRNA-synt_1d"/>
    <property type="match status" value="1"/>
</dbReference>
<dbReference type="PRINTS" id="PR01038">
    <property type="entry name" value="TRNASYNTHARG"/>
</dbReference>
<dbReference type="SMART" id="SM01016">
    <property type="entry name" value="Arg_tRNA_synt_N"/>
    <property type="match status" value="1"/>
</dbReference>
<dbReference type="SMART" id="SM00836">
    <property type="entry name" value="DALR_1"/>
    <property type="match status" value="1"/>
</dbReference>
<dbReference type="SUPFAM" id="SSF47323">
    <property type="entry name" value="Anticodon-binding domain of a subclass of class I aminoacyl-tRNA synthetases"/>
    <property type="match status" value="1"/>
</dbReference>
<dbReference type="SUPFAM" id="SSF55190">
    <property type="entry name" value="Arginyl-tRNA synthetase (ArgRS), N-terminal 'additional' domain"/>
    <property type="match status" value="1"/>
</dbReference>
<dbReference type="SUPFAM" id="SSF52374">
    <property type="entry name" value="Nucleotidylyl transferase"/>
    <property type="match status" value="1"/>
</dbReference>
<dbReference type="PROSITE" id="PS00178">
    <property type="entry name" value="AA_TRNA_LIGASE_I"/>
    <property type="match status" value="1"/>
</dbReference>
<accession>A8GM09</accession>
<organism>
    <name type="scientific">Rickettsia akari (strain Hartford)</name>
    <dbReference type="NCBI Taxonomy" id="293614"/>
    <lineage>
        <taxon>Bacteria</taxon>
        <taxon>Pseudomonadati</taxon>
        <taxon>Pseudomonadota</taxon>
        <taxon>Alphaproteobacteria</taxon>
        <taxon>Rickettsiales</taxon>
        <taxon>Rickettsiaceae</taxon>
        <taxon>Rickettsieae</taxon>
        <taxon>Rickettsia</taxon>
        <taxon>spotted fever group</taxon>
    </lineage>
</organism>